<comment type="function">
    <text evidence="1">Component of the EvC complex that positively regulates ciliary Hedgehog (Hh) signaling. Required for the localization of the EVC2:EVC subcomplex at the base of primary cilia.</text>
</comment>
<comment type="subunit">
    <text evidence="1">Component of the EvC complex composed of EFCAB7, IQCE, EVC2 and EVC; built from two subcomplexes, EVC2:EVC and EFCAB7:IQCE. Interacts (via EF-hand 1 and 2) with IQCE (via N-terminus); this interaction anchors the EVC-EVC2 complex in a signaling microdomain at the base of cilia and stimulates the Hedgehog (Hh) pathway. Interacts with EVC2 (via N-terminal end). Interacts with EVC.</text>
</comment>
<comment type="subcellular location">
    <subcellularLocation>
        <location evidence="1">Cell projection</location>
        <location evidence="1">Cilium membrane</location>
        <topology evidence="1">Peripheral membrane protein</topology>
        <orientation evidence="1">Cytoplasmic side</orientation>
    </subcellularLocation>
    <text evidence="1">The EvC complex localizes at the base of cilia in the EvC zone of primary cilia in a EFCAB7-dependent manner.</text>
</comment>
<comment type="alternative products">
    <event type="alternative splicing"/>
    <isoform>
        <id>A8K855-1</id>
        <name>1</name>
        <sequence type="displayed"/>
    </isoform>
    <isoform>
        <id>A8K855-2</id>
        <name>2</name>
        <sequence type="described" ref="VSP_030930"/>
    </isoform>
</comment>
<comment type="sequence caution" evidence="7">
    <conflict type="erroneous initiation">
        <sequence resource="EMBL-CDS" id="BAB47428"/>
    </conflict>
</comment>
<keyword id="KW-0025">Alternative splicing</keyword>
<keyword id="KW-0106">Calcium</keyword>
<keyword id="KW-1003">Cell membrane</keyword>
<keyword id="KW-0966">Cell projection</keyword>
<keyword id="KW-0472">Membrane</keyword>
<keyword id="KW-0479">Metal-binding</keyword>
<keyword id="KW-0597">Phosphoprotein</keyword>
<keyword id="KW-1267">Proteomics identification</keyword>
<keyword id="KW-1185">Reference proteome</keyword>
<keyword id="KW-0677">Repeat</keyword>
<dbReference type="EMBL" id="AB058702">
    <property type="protein sequence ID" value="BAB47428.1"/>
    <property type="status" value="ALT_INIT"/>
    <property type="molecule type" value="mRNA"/>
</dbReference>
<dbReference type="EMBL" id="AK292220">
    <property type="protein sequence ID" value="BAF84909.1"/>
    <property type="molecule type" value="mRNA"/>
</dbReference>
<dbReference type="EMBL" id="AK315850">
    <property type="protein sequence ID" value="BAF98741.1"/>
    <property type="molecule type" value="mRNA"/>
</dbReference>
<dbReference type="EMBL" id="AL109925">
    <property type="status" value="NOT_ANNOTATED_CDS"/>
    <property type="molecule type" value="Genomic_DNA"/>
</dbReference>
<dbReference type="EMBL" id="BX004807">
    <property type="status" value="NOT_ANNOTATED_CDS"/>
    <property type="molecule type" value="Genomic_DNA"/>
</dbReference>
<dbReference type="EMBL" id="CH471059">
    <property type="protein sequence ID" value="EAX06570.1"/>
    <property type="molecule type" value="Genomic_DNA"/>
</dbReference>
<dbReference type="EMBL" id="BC015814">
    <property type="protein sequence ID" value="AAH15814.1"/>
    <property type="molecule type" value="mRNA"/>
</dbReference>
<dbReference type="EMBL" id="AL833720">
    <property type="protein sequence ID" value="CAH56237.1"/>
    <property type="molecule type" value="mRNA"/>
</dbReference>
<dbReference type="CCDS" id="CCDS30737.1">
    <molecule id="A8K855-1"/>
</dbReference>
<dbReference type="RefSeq" id="NP_115813.2">
    <molecule id="A8K855-1"/>
    <property type="nucleotide sequence ID" value="NM_032437.4"/>
</dbReference>
<dbReference type="RefSeq" id="XP_005271331.1">
    <property type="nucleotide sequence ID" value="XM_005271274.3"/>
</dbReference>
<dbReference type="RefSeq" id="XP_006711040.1">
    <molecule id="A8K855-1"/>
    <property type="nucleotide sequence ID" value="XM_006710977.2"/>
</dbReference>
<dbReference type="RefSeq" id="XP_054195173.1">
    <molecule id="A8K855-1"/>
    <property type="nucleotide sequence ID" value="XM_054339198.1"/>
</dbReference>
<dbReference type="SMR" id="A8K855"/>
<dbReference type="BioGRID" id="124090">
    <property type="interactions" value="19"/>
</dbReference>
<dbReference type="FunCoup" id="A8K855">
    <property type="interactions" value="318"/>
</dbReference>
<dbReference type="IntAct" id="A8K855">
    <property type="interactions" value="15"/>
</dbReference>
<dbReference type="STRING" id="9606.ENSP00000360129"/>
<dbReference type="GlyGen" id="A8K855">
    <property type="glycosylation" value="1 site, 1 N-linked glycan (1 site)"/>
</dbReference>
<dbReference type="iPTMnet" id="A8K855"/>
<dbReference type="PhosphoSitePlus" id="A8K855"/>
<dbReference type="BioMuta" id="EFCAB7"/>
<dbReference type="jPOST" id="A8K855"/>
<dbReference type="MassIVE" id="A8K855"/>
<dbReference type="PaxDb" id="9606-ENSP00000360129"/>
<dbReference type="PeptideAtlas" id="A8K855"/>
<dbReference type="ProteomicsDB" id="1875">
    <molecule id="A8K855-1"/>
</dbReference>
<dbReference type="ProteomicsDB" id="1876">
    <molecule id="A8K855-2"/>
</dbReference>
<dbReference type="Pumba" id="A8K855"/>
<dbReference type="Antibodypedia" id="33354">
    <property type="antibodies" value="109 antibodies from 19 providers"/>
</dbReference>
<dbReference type="DNASU" id="84455"/>
<dbReference type="Ensembl" id="ENST00000371088.5">
    <molecule id="A8K855-1"/>
    <property type="protein sequence ID" value="ENSP00000360129.4"/>
    <property type="gene ID" value="ENSG00000203965.13"/>
</dbReference>
<dbReference type="GeneID" id="84455"/>
<dbReference type="KEGG" id="hsa:84455"/>
<dbReference type="MANE-Select" id="ENST00000371088.5">
    <property type="protein sequence ID" value="ENSP00000360129.4"/>
    <property type="RefSeq nucleotide sequence ID" value="NM_032437.4"/>
    <property type="RefSeq protein sequence ID" value="NP_115813.2"/>
</dbReference>
<dbReference type="UCSC" id="uc001dbf.4">
    <molecule id="A8K855-1"/>
    <property type="organism name" value="human"/>
</dbReference>
<dbReference type="AGR" id="HGNC:29379"/>
<dbReference type="CTD" id="84455"/>
<dbReference type="DisGeNET" id="84455"/>
<dbReference type="GeneCards" id="EFCAB7"/>
<dbReference type="HGNC" id="HGNC:29379">
    <property type="gene designation" value="EFCAB7"/>
</dbReference>
<dbReference type="HPA" id="ENSG00000203965">
    <property type="expression patterns" value="Low tissue specificity"/>
</dbReference>
<dbReference type="MIM" id="617632">
    <property type="type" value="gene"/>
</dbReference>
<dbReference type="neXtProt" id="NX_A8K855"/>
<dbReference type="OpenTargets" id="ENSG00000203965"/>
<dbReference type="PharmGKB" id="PA162384389"/>
<dbReference type="VEuPathDB" id="HostDB:ENSG00000203965"/>
<dbReference type="eggNOG" id="KOG0027">
    <property type="taxonomic scope" value="Eukaryota"/>
</dbReference>
<dbReference type="GeneTree" id="ENSGT00390000015466"/>
<dbReference type="HOGENOM" id="CLU_031520_1_0_1"/>
<dbReference type="InParanoid" id="A8K855"/>
<dbReference type="OMA" id="KTIDKYW"/>
<dbReference type="OrthoDB" id="26525at2759"/>
<dbReference type="PAN-GO" id="A8K855">
    <property type="GO annotations" value="3 GO annotations based on evolutionary models"/>
</dbReference>
<dbReference type="PhylomeDB" id="A8K855"/>
<dbReference type="TreeFam" id="TF329354"/>
<dbReference type="PathwayCommons" id="A8K855"/>
<dbReference type="Reactome" id="R-HSA-5635838">
    <property type="pathway name" value="Activation of SMO"/>
</dbReference>
<dbReference type="SignaLink" id="A8K855"/>
<dbReference type="BioGRID-ORCS" id="84455">
    <property type="hits" value="11 hits in 1155 CRISPR screens"/>
</dbReference>
<dbReference type="ChiTaRS" id="EFCAB7">
    <property type="organism name" value="human"/>
</dbReference>
<dbReference type="GenomeRNAi" id="84455"/>
<dbReference type="Pharos" id="A8K855">
    <property type="development level" value="Tdark"/>
</dbReference>
<dbReference type="PRO" id="PR:A8K855"/>
<dbReference type="Proteomes" id="UP000005640">
    <property type="component" value="Chromosome 1"/>
</dbReference>
<dbReference type="RNAct" id="A8K855">
    <property type="molecule type" value="protein"/>
</dbReference>
<dbReference type="Bgee" id="ENSG00000203965">
    <property type="expression patterns" value="Expressed in oocyte and 178 other cell types or tissues"/>
</dbReference>
<dbReference type="GO" id="GO:0060170">
    <property type="term" value="C:ciliary membrane"/>
    <property type="evidence" value="ECO:0000250"/>
    <property type="project" value="UniProtKB"/>
</dbReference>
<dbReference type="GO" id="GO:0005929">
    <property type="term" value="C:cilium"/>
    <property type="evidence" value="ECO:0000304"/>
    <property type="project" value="Reactome"/>
</dbReference>
<dbReference type="GO" id="GO:0009898">
    <property type="term" value="C:cytoplasmic side of plasma membrane"/>
    <property type="evidence" value="ECO:0000250"/>
    <property type="project" value="UniProtKB"/>
</dbReference>
<dbReference type="GO" id="GO:0098797">
    <property type="term" value="C:plasma membrane protein complex"/>
    <property type="evidence" value="ECO:0000250"/>
    <property type="project" value="UniProtKB"/>
</dbReference>
<dbReference type="GO" id="GO:0005509">
    <property type="term" value="F:calcium ion binding"/>
    <property type="evidence" value="ECO:0007669"/>
    <property type="project" value="InterPro"/>
</dbReference>
<dbReference type="GO" id="GO:0042307">
    <property type="term" value="P:positive regulation of protein import into nucleus"/>
    <property type="evidence" value="ECO:0000250"/>
    <property type="project" value="UniProtKB"/>
</dbReference>
<dbReference type="GO" id="GO:1903569">
    <property type="term" value="P:positive regulation of protein localization to ciliary membrane"/>
    <property type="evidence" value="ECO:0000250"/>
    <property type="project" value="UniProtKB"/>
</dbReference>
<dbReference type="GO" id="GO:0045944">
    <property type="term" value="P:positive regulation of transcription by RNA polymerase II"/>
    <property type="evidence" value="ECO:0000250"/>
    <property type="project" value="UniProtKB"/>
</dbReference>
<dbReference type="GO" id="GO:0120229">
    <property type="term" value="P:protein localization to motile cilium"/>
    <property type="evidence" value="ECO:0007669"/>
    <property type="project" value="Ensembl"/>
</dbReference>
<dbReference type="GO" id="GO:0008589">
    <property type="term" value="P:regulation of smoothened signaling pathway"/>
    <property type="evidence" value="ECO:0007669"/>
    <property type="project" value="Ensembl"/>
</dbReference>
<dbReference type="CDD" id="cd00051">
    <property type="entry name" value="EFh"/>
    <property type="match status" value="1"/>
</dbReference>
<dbReference type="FunFam" id="1.10.238.10:FF:000193">
    <property type="entry name" value="EF-hand calcium-binding domain-containing protein 7"/>
    <property type="match status" value="1"/>
</dbReference>
<dbReference type="FunFam" id="1.10.238.10:FF:000161">
    <property type="entry name" value="EF-hand calcium-binding domain-containing protein 7 isoform X2"/>
    <property type="match status" value="1"/>
</dbReference>
<dbReference type="Gene3D" id="1.10.238.10">
    <property type="entry name" value="EF-hand"/>
    <property type="match status" value="2"/>
</dbReference>
<dbReference type="InterPro" id="IPR011992">
    <property type="entry name" value="EF-hand-dom_pair"/>
</dbReference>
<dbReference type="InterPro" id="IPR018247">
    <property type="entry name" value="EF_Hand_1_Ca_BS"/>
</dbReference>
<dbReference type="InterPro" id="IPR002048">
    <property type="entry name" value="EF_hand_dom"/>
</dbReference>
<dbReference type="InterPro" id="IPR052266">
    <property type="entry name" value="Miro-EF-hand_domain"/>
</dbReference>
<dbReference type="PANTHER" id="PTHR46819">
    <property type="entry name" value="EF-HAND CALCIUM-BINDING DOMAIN-CONTAINING PROTEIN 7"/>
    <property type="match status" value="1"/>
</dbReference>
<dbReference type="PANTHER" id="PTHR46819:SF1">
    <property type="entry name" value="EF-HAND CALCIUM-BINDING DOMAIN-CONTAINING PROTEIN 7"/>
    <property type="match status" value="1"/>
</dbReference>
<dbReference type="Pfam" id="PF13499">
    <property type="entry name" value="EF-hand_7"/>
    <property type="match status" value="1"/>
</dbReference>
<dbReference type="SMART" id="SM00054">
    <property type="entry name" value="EFh"/>
    <property type="match status" value="3"/>
</dbReference>
<dbReference type="SUPFAM" id="SSF47473">
    <property type="entry name" value="EF-hand"/>
    <property type="match status" value="2"/>
</dbReference>
<dbReference type="PROSITE" id="PS00018">
    <property type="entry name" value="EF_HAND_1"/>
    <property type="match status" value="1"/>
</dbReference>
<dbReference type="PROSITE" id="PS50222">
    <property type="entry name" value="EF_HAND_2"/>
    <property type="match status" value="3"/>
</dbReference>
<organism>
    <name type="scientific">Homo sapiens</name>
    <name type="common">Human</name>
    <dbReference type="NCBI Taxonomy" id="9606"/>
    <lineage>
        <taxon>Eukaryota</taxon>
        <taxon>Metazoa</taxon>
        <taxon>Chordata</taxon>
        <taxon>Craniata</taxon>
        <taxon>Vertebrata</taxon>
        <taxon>Euteleostomi</taxon>
        <taxon>Mammalia</taxon>
        <taxon>Eutheria</taxon>
        <taxon>Euarchontoglires</taxon>
        <taxon>Primates</taxon>
        <taxon>Haplorrhini</taxon>
        <taxon>Catarrhini</taxon>
        <taxon>Hominidae</taxon>
        <taxon>Homo</taxon>
    </lineage>
</organism>
<feature type="chain" id="PRO_0000317266" description="EF-hand calcium-binding domain-containing protein 7">
    <location>
        <begin position="1"/>
        <end position="629"/>
    </location>
</feature>
<feature type="domain" description="EF-hand 1" evidence="2">
    <location>
        <begin position="102"/>
        <end position="137"/>
    </location>
</feature>
<feature type="domain" description="EF-hand 2" evidence="2">
    <location>
        <begin position="138"/>
        <end position="173"/>
    </location>
</feature>
<feature type="domain" description="EF-hand 3" evidence="2">
    <location>
        <begin position="403"/>
        <end position="438"/>
    </location>
</feature>
<feature type="region of interest" description="Disordered" evidence="3">
    <location>
        <begin position="1"/>
        <end position="25"/>
    </location>
</feature>
<feature type="region of interest" description="Disordered" evidence="3">
    <location>
        <begin position="195"/>
        <end position="229"/>
    </location>
</feature>
<feature type="compositionally biased region" description="Polar residues" evidence="3">
    <location>
        <begin position="7"/>
        <end position="21"/>
    </location>
</feature>
<feature type="binding site" evidence="2">
    <location>
        <position position="416"/>
    </location>
    <ligand>
        <name>Ca(2+)</name>
        <dbReference type="ChEBI" id="CHEBI:29108"/>
    </ligand>
</feature>
<feature type="binding site" evidence="2">
    <location>
        <position position="418"/>
    </location>
    <ligand>
        <name>Ca(2+)</name>
        <dbReference type="ChEBI" id="CHEBI:29108"/>
    </ligand>
</feature>
<feature type="binding site" evidence="2">
    <location>
        <position position="420"/>
    </location>
    <ligand>
        <name>Ca(2+)</name>
        <dbReference type="ChEBI" id="CHEBI:29108"/>
    </ligand>
</feature>
<feature type="binding site" evidence="2">
    <location>
        <position position="427"/>
    </location>
    <ligand>
        <name>Ca(2+)</name>
        <dbReference type="ChEBI" id="CHEBI:29108"/>
    </ligand>
</feature>
<feature type="modified residue" description="Phosphoserine" evidence="8">
    <location>
        <position position="200"/>
    </location>
</feature>
<feature type="modified residue" description="Phosphoserine" evidence="8">
    <location>
        <position position="212"/>
    </location>
</feature>
<feature type="splice variant" id="VSP_030930" description="In isoform 2." evidence="6">
    <original>VCQHVMPLNERQEWIYYCIYSLIS</original>
    <variation>P</variation>
    <location>
        <begin position="606"/>
        <end position="629"/>
    </location>
</feature>
<feature type="sequence variant" id="VAR_038493" description="In dbSNP:rs17125106.">
    <original>F</original>
    <variation>I</variation>
    <location>
        <position position="27"/>
    </location>
</feature>
<feature type="sequence variant" id="VAR_038494" description="In dbSNP:rs9436246.">
    <original>S</original>
    <variation>G</variation>
    <location>
        <position position="186"/>
    </location>
</feature>
<feature type="sequence variant" id="VAR_038495" description="In dbSNP:rs6693255." evidence="4">
    <original>T</original>
    <variation>I</variation>
    <location>
        <position position="248"/>
    </location>
</feature>
<feature type="sequence variant" id="VAR_038496" description="In dbSNP:rs6657480." evidence="4">
    <original>M</original>
    <variation>T</variation>
    <location>
        <position position="262"/>
    </location>
</feature>
<feature type="sequence variant" id="VAR_038497" description="In dbSNP:rs2273367." evidence="4 5">
    <original>R</original>
    <variation>K</variation>
    <location>
        <position position="375"/>
    </location>
</feature>
<sequence>MAISPRSDATFSSQKSTPSESPRTKKFPLTEEEIFYMNCRAAYLTVFKSSLENIISKDQLYLALQHAGRNPSQKTINKYWTPQTAKLNFDDFCIILRKEKPTSKAELLKSFKQLDVNDDGCILHTDLYKFLTKRGEKMTREEVNAIINLADVNADGKFDYIKFCKLYMTTNEQCLKTTLEKLEVDSKLMRHQFGNHIEGSPERDPSPVPKPSPKITRKTDPETFLNKGDTRSSLLSATRKFKTSVSFTVTMGANGNRNSKLMEPNLIKDWQHMQSKGCFFLEEDGEIISHQYRMQIAQRSMVYLTIKPLNLSQVEGKPSPWLSVDTALYILKENESQANLQLVCFTELRNREVFGWTGELGPGIYWLIPSTTGCRLRKKIKPVTDEAQLVYRDETGELFLTKEFKSTLSDIFEVIDLDGNGLLSLEEYNFFELRTSGEKCDEDAWAVCRENFDTKRNELTRQGFMDLNLMEANDREGDPCDLWVTLHSMGYNKALELTEACPFVIDIYAEKCKPKIKAVHMEACSGQLEKAICKSVLSNGDAKVMDGYENIIVHTYSCDTWITSVIENKSDEKVIIHISNELSKNCINNRGLNIFAVEVGPKSTMVCQHVMPLNERQEWIYYCIYSLIS</sequence>
<gene>
    <name type="primary">EFCAB7</name>
    <name type="synonym">KIAA1799</name>
</gene>
<accession>A8K855</accession>
<accession>Q658P0</accession>
<accession>Q96B95</accession>
<accession>Q96JM6</accession>
<name>EFCB7_HUMAN</name>
<reference key="1">
    <citation type="journal article" date="2001" name="DNA Res.">
        <title>Prediction of the coding sequences of unidentified human genes. XX. The complete sequences of 100 new cDNA clones from brain which code for large proteins in vitro.</title>
        <authorList>
            <person name="Nagase T."/>
            <person name="Nakayama M."/>
            <person name="Nakajima D."/>
            <person name="Kikuno R."/>
            <person name="Ohara O."/>
        </authorList>
    </citation>
    <scope>NUCLEOTIDE SEQUENCE [LARGE SCALE MRNA] (ISOFORM 2)</scope>
    <source>
        <tissue>Brain</tissue>
    </source>
</reference>
<reference key="2">
    <citation type="journal article" date="2004" name="Nat. Genet.">
        <title>Complete sequencing and characterization of 21,243 full-length human cDNAs.</title>
        <authorList>
            <person name="Ota T."/>
            <person name="Suzuki Y."/>
            <person name="Nishikawa T."/>
            <person name="Otsuki T."/>
            <person name="Sugiyama T."/>
            <person name="Irie R."/>
            <person name="Wakamatsu A."/>
            <person name="Hayashi K."/>
            <person name="Sato H."/>
            <person name="Nagai K."/>
            <person name="Kimura K."/>
            <person name="Makita H."/>
            <person name="Sekine M."/>
            <person name="Obayashi M."/>
            <person name="Nishi T."/>
            <person name="Shibahara T."/>
            <person name="Tanaka T."/>
            <person name="Ishii S."/>
            <person name="Yamamoto J."/>
            <person name="Saito K."/>
            <person name="Kawai Y."/>
            <person name="Isono Y."/>
            <person name="Nakamura Y."/>
            <person name="Nagahari K."/>
            <person name="Murakami K."/>
            <person name="Yasuda T."/>
            <person name="Iwayanagi T."/>
            <person name="Wagatsuma M."/>
            <person name="Shiratori A."/>
            <person name="Sudo H."/>
            <person name="Hosoiri T."/>
            <person name="Kaku Y."/>
            <person name="Kodaira H."/>
            <person name="Kondo H."/>
            <person name="Sugawara M."/>
            <person name="Takahashi M."/>
            <person name="Kanda K."/>
            <person name="Yokoi T."/>
            <person name="Furuya T."/>
            <person name="Kikkawa E."/>
            <person name="Omura Y."/>
            <person name="Abe K."/>
            <person name="Kamihara K."/>
            <person name="Katsuta N."/>
            <person name="Sato K."/>
            <person name="Tanikawa M."/>
            <person name="Yamazaki M."/>
            <person name="Ninomiya K."/>
            <person name="Ishibashi T."/>
            <person name="Yamashita H."/>
            <person name="Murakawa K."/>
            <person name="Fujimori K."/>
            <person name="Tanai H."/>
            <person name="Kimata M."/>
            <person name="Watanabe M."/>
            <person name="Hiraoka S."/>
            <person name="Chiba Y."/>
            <person name="Ishida S."/>
            <person name="Ono Y."/>
            <person name="Takiguchi S."/>
            <person name="Watanabe S."/>
            <person name="Yosida M."/>
            <person name="Hotuta T."/>
            <person name="Kusano J."/>
            <person name="Kanehori K."/>
            <person name="Takahashi-Fujii A."/>
            <person name="Hara H."/>
            <person name="Tanase T.-O."/>
            <person name="Nomura Y."/>
            <person name="Togiya S."/>
            <person name="Komai F."/>
            <person name="Hara R."/>
            <person name="Takeuchi K."/>
            <person name="Arita M."/>
            <person name="Imose N."/>
            <person name="Musashino K."/>
            <person name="Yuuki H."/>
            <person name="Oshima A."/>
            <person name="Sasaki N."/>
            <person name="Aotsuka S."/>
            <person name="Yoshikawa Y."/>
            <person name="Matsunawa H."/>
            <person name="Ichihara T."/>
            <person name="Shiohata N."/>
            <person name="Sano S."/>
            <person name="Moriya S."/>
            <person name="Momiyama H."/>
            <person name="Satoh N."/>
            <person name="Takami S."/>
            <person name="Terashima Y."/>
            <person name="Suzuki O."/>
            <person name="Nakagawa S."/>
            <person name="Senoh A."/>
            <person name="Mizoguchi H."/>
            <person name="Goto Y."/>
            <person name="Shimizu F."/>
            <person name="Wakebe H."/>
            <person name="Hishigaki H."/>
            <person name="Watanabe T."/>
            <person name="Sugiyama A."/>
            <person name="Takemoto M."/>
            <person name="Kawakami B."/>
            <person name="Yamazaki M."/>
            <person name="Watanabe K."/>
            <person name="Kumagai A."/>
            <person name="Itakura S."/>
            <person name="Fukuzumi Y."/>
            <person name="Fujimori Y."/>
            <person name="Komiyama M."/>
            <person name="Tashiro H."/>
            <person name="Tanigami A."/>
            <person name="Fujiwara T."/>
            <person name="Ono T."/>
            <person name="Yamada K."/>
            <person name="Fujii Y."/>
            <person name="Ozaki K."/>
            <person name="Hirao M."/>
            <person name="Ohmori Y."/>
            <person name="Kawabata A."/>
            <person name="Hikiji T."/>
            <person name="Kobatake N."/>
            <person name="Inagaki H."/>
            <person name="Ikema Y."/>
            <person name="Okamoto S."/>
            <person name="Okitani R."/>
            <person name="Kawakami T."/>
            <person name="Noguchi S."/>
            <person name="Itoh T."/>
            <person name="Shigeta K."/>
            <person name="Senba T."/>
            <person name="Matsumura K."/>
            <person name="Nakajima Y."/>
            <person name="Mizuno T."/>
            <person name="Morinaga M."/>
            <person name="Sasaki M."/>
            <person name="Togashi T."/>
            <person name="Oyama M."/>
            <person name="Hata H."/>
            <person name="Watanabe M."/>
            <person name="Komatsu T."/>
            <person name="Mizushima-Sugano J."/>
            <person name="Satoh T."/>
            <person name="Shirai Y."/>
            <person name="Takahashi Y."/>
            <person name="Nakagawa K."/>
            <person name="Okumura K."/>
            <person name="Nagase T."/>
            <person name="Nomura N."/>
            <person name="Kikuchi H."/>
            <person name="Masuho Y."/>
            <person name="Yamashita R."/>
            <person name="Nakai K."/>
            <person name="Yada T."/>
            <person name="Nakamura Y."/>
            <person name="Ohara O."/>
            <person name="Isogai T."/>
            <person name="Sugano S."/>
        </authorList>
    </citation>
    <scope>NUCLEOTIDE SEQUENCE [LARGE SCALE MRNA] (ISOFORM 1)</scope>
    <source>
        <tissue>Esophagus</tissue>
        <tissue>Kidney</tissue>
    </source>
</reference>
<reference key="3">
    <citation type="journal article" date="2006" name="Nature">
        <title>The DNA sequence and biological annotation of human chromosome 1.</title>
        <authorList>
            <person name="Gregory S.G."/>
            <person name="Barlow K.F."/>
            <person name="McLay K.E."/>
            <person name="Kaul R."/>
            <person name="Swarbreck D."/>
            <person name="Dunham A."/>
            <person name="Scott C.E."/>
            <person name="Howe K.L."/>
            <person name="Woodfine K."/>
            <person name="Spencer C.C.A."/>
            <person name="Jones M.C."/>
            <person name="Gillson C."/>
            <person name="Searle S."/>
            <person name="Zhou Y."/>
            <person name="Kokocinski F."/>
            <person name="McDonald L."/>
            <person name="Evans R."/>
            <person name="Phillips K."/>
            <person name="Atkinson A."/>
            <person name="Cooper R."/>
            <person name="Jones C."/>
            <person name="Hall R.E."/>
            <person name="Andrews T.D."/>
            <person name="Lloyd C."/>
            <person name="Ainscough R."/>
            <person name="Almeida J.P."/>
            <person name="Ambrose K.D."/>
            <person name="Anderson F."/>
            <person name="Andrew R.W."/>
            <person name="Ashwell R.I.S."/>
            <person name="Aubin K."/>
            <person name="Babbage A.K."/>
            <person name="Bagguley C.L."/>
            <person name="Bailey J."/>
            <person name="Beasley H."/>
            <person name="Bethel G."/>
            <person name="Bird C.P."/>
            <person name="Bray-Allen S."/>
            <person name="Brown J.Y."/>
            <person name="Brown A.J."/>
            <person name="Buckley D."/>
            <person name="Burton J."/>
            <person name="Bye J."/>
            <person name="Carder C."/>
            <person name="Chapman J.C."/>
            <person name="Clark S.Y."/>
            <person name="Clarke G."/>
            <person name="Clee C."/>
            <person name="Cobley V."/>
            <person name="Collier R.E."/>
            <person name="Corby N."/>
            <person name="Coville G.J."/>
            <person name="Davies J."/>
            <person name="Deadman R."/>
            <person name="Dunn M."/>
            <person name="Earthrowl M."/>
            <person name="Ellington A.G."/>
            <person name="Errington H."/>
            <person name="Frankish A."/>
            <person name="Frankland J."/>
            <person name="French L."/>
            <person name="Garner P."/>
            <person name="Garnett J."/>
            <person name="Gay L."/>
            <person name="Ghori M.R.J."/>
            <person name="Gibson R."/>
            <person name="Gilby L.M."/>
            <person name="Gillett W."/>
            <person name="Glithero R.J."/>
            <person name="Grafham D.V."/>
            <person name="Griffiths C."/>
            <person name="Griffiths-Jones S."/>
            <person name="Grocock R."/>
            <person name="Hammond S."/>
            <person name="Harrison E.S.I."/>
            <person name="Hart E."/>
            <person name="Haugen E."/>
            <person name="Heath P.D."/>
            <person name="Holmes S."/>
            <person name="Holt K."/>
            <person name="Howden P.J."/>
            <person name="Hunt A.R."/>
            <person name="Hunt S.E."/>
            <person name="Hunter G."/>
            <person name="Isherwood J."/>
            <person name="James R."/>
            <person name="Johnson C."/>
            <person name="Johnson D."/>
            <person name="Joy A."/>
            <person name="Kay M."/>
            <person name="Kershaw J.K."/>
            <person name="Kibukawa M."/>
            <person name="Kimberley A.M."/>
            <person name="King A."/>
            <person name="Knights A.J."/>
            <person name="Lad H."/>
            <person name="Laird G."/>
            <person name="Lawlor S."/>
            <person name="Leongamornlert D.A."/>
            <person name="Lloyd D.M."/>
            <person name="Loveland J."/>
            <person name="Lovell J."/>
            <person name="Lush M.J."/>
            <person name="Lyne R."/>
            <person name="Martin S."/>
            <person name="Mashreghi-Mohammadi M."/>
            <person name="Matthews L."/>
            <person name="Matthews N.S.W."/>
            <person name="McLaren S."/>
            <person name="Milne S."/>
            <person name="Mistry S."/>
            <person name="Moore M.J.F."/>
            <person name="Nickerson T."/>
            <person name="O'Dell C.N."/>
            <person name="Oliver K."/>
            <person name="Palmeiri A."/>
            <person name="Palmer S.A."/>
            <person name="Parker A."/>
            <person name="Patel D."/>
            <person name="Pearce A.V."/>
            <person name="Peck A.I."/>
            <person name="Pelan S."/>
            <person name="Phelps K."/>
            <person name="Phillimore B.J."/>
            <person name="Plumb R."/>
            <person name="Rajan J."/>
            <person name="Raymond C."/>
            <person name="Rouse G."/>
            <person name="Saenphimmachak C."/>
            <person name="Sehra H.K."/>
            <person name="Sheridan E."/>
            <person name="Shownkeen R."/>
            <person name="Sims S."/>
            <person name="Skuce C.D."/>
            <person name="Smith M."/>
            <person name="Steward C."/>
            <person name="Subramanian S."/>
            <person name="Sycamore N."/>
            <person name="Tracey A."/>
            <person name="Tromans A."/>
            <person name="Van Helmond Z."/>
            <person name="Wall M."/>
            <person name="Wallis J.M."/>
            <person name="White S."/>
            <person name="Whitehead S.L."/>
            <person name="Wilkinson J.E."/>
            <person name="Willey D.L."/>
            <person name="Williams H."/>
            <person name="Wilming L."/>
            <person name="Wray P.W."/>
            <person name="Wu Z."/>
            <person name="Coulson A."/>
            <person name="Vaudin M."/>
            <person name="Sulston J.E."/>
            <person name="Durbin R.M."/>
            <person name="Hubbard T."/>
            <person name="Wooster R."/>
            <person name="Dunham I."/>
            <person name="Carter N.P."/>
            <person name="McVean G."/>
            <person name="Ross M.T."/>
            <person name="Harrow J."/>
            <person name="Olson M.V."/>
            <person name="Beck S."/>
            <person name="Rogers J."/>
            <person name="Bentley D.R."/>
        </authorList>
    </citation>
    <scope>NUCLEOTIDE SEQUENCE [LARGE SCALE GENOMIC DNA]</scope>
</reference>
<reference key="4">
    <citation type="submission" date="2005-09" db="EMBL/GenBank/DDBJ databases">
        <authorList>
            <person name="Mural R.J."/>
            <person name="Istrail S."/>
            <person name="Sutton G.G."/>
            <person name="Florea L."/>
            <person name="Halpern A.L."/>
            <person name="Mobarry C.M."/>
            <person name="Lippert R."/>
            <person name="Walenz B."/>
            <person name="Shatkay H."/>
            <person name="Dew I."/>
            <person name="Miller J.R."/>
            <person name="Flanigan M.J."/>
            <person name="Edwards N.J."/>
            <person name="Bolanos R."/>
            <person name="Fasulo D."/>
            <person name="Halldorsson B.V."/>
            <person name="Hannenhalli S."/>
            <person name="Turner R."/>
            <person name="Yooseph S."/>
            <person name="Lu F."/>
            <person name="Nusskern D.R."/>
            <person name="Shue B.C."/>
            <person name="Zheng X.H."/>
            <person name="Zhong F."/>
            <person name="Delcher A.L."/>
            <person name="Huson D.H."/>
            <person name="Kravitz S.A."/>
            <person name="Mouchard L."/>
            <person name="Reinert K."/>
            <person name="Remington K.A."/>
            <person name="Clark A.G."/>
            <person name="Waterman M.S."/>
            <person name="Eichler E.E."/>
            <person name="Adams M.D."/>
            <person name="Hunkapiller M.W."/>
            <person name="Myers E.W."/>
            <person name="Venter J.C."/>
        </authorList>
    </citation>
    <scope>NUCLEOTIDE SEQUENCE [LARGE SCALE GENOMIC DNA]</scope>
</reference>
<reference key="5">
    <citation type="journal article" date="2004" name="Genome Res.">
        <title>The status, quality, and expansion of the NIH full-length cDNA project: the Mammalian Gene Collection (MGC).</title>
        <authorList>
            <consortium name="The MGC Project Team"/>
        </authorList>
    </citation>
    <scope>NUCLEOTIDE SEQUENCE [LARGE SCALE MRNA] (ISOFORM 1)</scope>
    <scope>VARIANTS ILE-248; THR-262 AND LYS-375</scope>
    <source>
        <tissue>Skin</tissue>
    </source>
</reference>
<reference key="6">
    <citation type="journal article" date="2007" name="BMC Genomics">
        <title>The full-ORF clone resource of the German cDNA consortium.</title>
        <authorList>
            <person name="Bechtel S."/>
            <person name="Rosenfelder H."/>
            <person name="Duda A."/>
            <person name="Schmidt C.P."/>
            <person name="Ernst U."/>
            <person name="Wellenreuther R."/>
            <person name="Mehrle A."/>
            <person name="Schuster C."/>
            <person name="Bahr A."/>
            <person name="Bloecker H."/>
            <person name="Heubner D."/>
            <person name="Hoerlein A."/>
            <person name="Michel G."/>
            <person name="Wedler H."/>
            <person name="Koehrer K."/>
            <person name="Ottenwaelder B."/>
            <person name="Poustka A."/>
            <person name="Wiemann S."/>
            <person name="Schupp I."/>
        </authorList>
    </citation>
    <scope>NUCLEOTIDE SEQUENCE [LARGE SCALE MRNA] OF 353-629</scope>
    <scope>VARIANT LYS-375</scope>
    <source>
        <tissue>Stomach</tissue>
    </source>
</reference>
<reference key="7">
    <citation type="journal article" date="2013" name="J. Proteome Res.">
        <title>Toward a comprehensive characterization of a human cancer cell phosphoproteome.</title>
        <authorList>
            <person name="Zhou H."/>
            <person name="Di Palma S."/>
            <person name="Preisinger C."/>
            <person name="Peng M."/>
            <person name="Polat A.N."/>
            <person name="Heck A.J."/>
            <person name="Mohammed S."/>
        </authorList>
    </citation>
    <scope>PHOSPHORYLATION [LARGE SCALE ANALYSIS] AT SER-200 AND SER-212</scope>
    <scope>IDENTIFICATION BY MASS SPECTROMETRY [LARGE SCALE ANALYSIS]</scope>
    <source>
        <tissue>Cervix carcinoma</tissue>
    </source>
</reference>
<protein>
    <recommendedName>
        <fullName>EF-hand calcium-binding domain-containing protein 7</fullName>
    </recommendedName>
</protein>
<evidence type="ECO:0000250" key="1">
    <source>
        <dbReference type="UniProtKB" id="Q8VDY4"/>
    </source>
</evidence>
<evidence type="ECO:0000255" key="2">
    <source>
        <dbReference type="PROSITE-ProRule" id="PRU00448"/>
    </source>
</evidence>
<evidence type="ECO:0000256" key="3">
    <source>
        <dbReference type="SAM" id="MobiDB-lite"/>
    </source>
</evidence>
<evidence type="ECO:0000269" key="4">
    <source>
    </source>
</evidence>
<evidence type="ECO:0000269" key="5">
    <source>
    </source>
</evidence>
<evidence type="ECO:0000303" key="6">
    <source>
    </source>
</evidence>
<evidence type="ECO:0000305" key="7"/>
<evidence type="ECO:0007744" key="8">
    <source>
    </source>
</evidence>
<proteinExistence type="evidence at protein level"/>